<sequence>MNHIRNFSIIAHIDHGKSTLADRIIQRCGGLADREMEAQVLDSMDIEKERGITIKAQTAALQYKARDGKVYNLNLIDTPGHVDFSYEVSRSLSACEGALLVVDASQGVEAQTVANCYTALDLGVEVLPVLNKMDLPQADPDTAKAEIEDVIGIDASEAIAISAKTGMGIDDVLEQIVAKVPAPRGKPDAPLRAMIIDSWFDSYVGVVMLVRVVDGRLQKGERFKMMASGAAYEANNLGVFTPAQQSRDALEAGEVGYIIAGIKELKAAKVGDTITLEKKLPNNLGPATEALPGFKEIQPQVFAGLYPTEANQYDALRDALEKLQLNDASLHFEPEVSQALGFGFRCGFLGLLHMEIVQERLEREFDQDLITTAPSVVYEVVKGDGEVIMVENPSKMPDQGKIQEIREPIVTVHLYMPQDYVGPVMTLANQKRGVQMNMQYHGRQVMLTYELPLGEIVLDFFDKLKSVSRGYASMDYEFKEYRPSDVVKVDILLNGEKVDALSIIVHRSQSQYRGRAVAAKMREIISRQMFDVAIQAAIGANIIARETIKALRKNVLAKCYGGDITRKRKLLEKQKAGKKRMKQIGSVEVPQEAFLAILQVED</sequence>
<protein>
    <recommendedName>
        <fullName evidence="1">Elongation factor 4</fullName>
        <shortName evidence="1">EF-4</shortName>
        <ecNumber evidence="1">3.6.5.n1</ecNumber>
    </recommendedName>
    <alternativeName>
        <fullName evidence="1">Ribosomal back-translocase LepA</fullName>
    </alternativeName>
</protein>
<evidence type="ECO:0000255" key="1">
    <source>
        <dbReference type="HAMAP-Rule" id="MF_00071"/>
    </source>
</evidence>
<dbReference type="EC" id="3.6.5.n1" evidence="1"/>
<dbReference type="EMBL" id="CP001392">
    <property type="protein sequence ID" value="ACM34058.1"/>
    <property type="molecule type" value="Genomic_DNA"/>
</dbReference>
<dbReference type="RefSeq" id="WP_015913971.1">
    <property type="nucleotide sequence ID" value="NC_011992.1"/>
</dbReference>
<dbReference type="SMR" id="B9MDP9"/>
<dbReference type="KEGG" id="dia:Dtpsy_2623"/>
<dbReference type="eggNOG" id="COG0481">
    <property type="taxonomic scope" value="Bacteria"/>
</dbReference>
<dbReference type="HOGENOM" id="CLU_009995_3_3_4"/>
<dbReference type="Proteomes" id="UP000000450">
    <property type="component" value="Chromosome"/>
</dbReference>
<dbReference type="GO" id="GO:0005886">
    <property type="term" value="C:plasma membrane"/>
    <property type="evidence" value="ECO:0007669"/>
    <property type="project" value="UniProtKB-SubCell"/>
</dbReference>
<dbReference type="GO" id="GO:0005525">
    <property type="term" value="F:GTP binding"/>
    <property type="evidence" value="ECO:0007669"/>
    <property type="project" value="UniProtKB-UniRule"/>
</dbReference>
<dbReference type="GO" id="GO:0003924">
    <property type="term" value="F:GTPase activity"/>
    <property type="evidence" value="ECO:0007669"/>
    <property type="project" value="UniProtKB-UniRule"/>
</dbReference>
<dbReference type="GO" id="GO:0097216">
    <property type="term" value="F:guanosine tetraphosphate binding"/>
    <property type="evidence" value="ECO:0007669"/>
    <property type="project" value="UniProtKB-ARBA"/>
</dbReference>
<dbReference type="GO" id="GO:0043022">
    <property type="term" value="F:ribosome binding"/>
    <property type="evidence" value="ECO:0007669"/>
    <property type="project" value="UniProtKB-UniRule"/>
</dbReference>
<dbReference type="GO" id="GO:0003746">
    <property type="term" value="F:translation elongation factor activity"/>
    <property type="evidence" value="ECO:0007669"/>
    <property type="project" value="UniProtKB-UniRule"/>
</dbReference>
<dbReference type="GO" id="GO:0045727">
    <property type="term" value="P:positive regulation of translation"/>
    <property type="evidence" value="ECO:0007669"/>
    <property type="project" value="UniProtKB-UniRule"/>
</dbReference>
<dbReference type="CDD" id="cd16260">
    <property type="entry name" value="EF4_III"/>
    <property type="match status" value="1"/>
</dbReference>
<dbReference type="CDD" id="cd01890">
    <property type="entry name" value="LepA"/>
    <property type="match status" value="1"/>
</dbReference>
<dbReference type="CDD" id="cd03709">
    <property type="entry name" value="lepA_C"/>
    <property type="match status" value="1"/>
</dbReference>
<dbReference type="FunFam" id="3.40.50.300:FF:000078">
    <property type="entry name" value="Elongation factor 4"/>
    <property type="match status" value="1"/>
</dbReference>
<dbReference type="FunFam" id="2.40.30.10:FF:000015">
    <property type="entry name" value="Translation factor GUF1, mitochondrial"/>
    <property type="match status" value="1"/>
</dbReference>
<dbReference type="FunFam" id="3.30.70.240:FF:000007">
    <property type="entry name" value="Translation factor GUF1, mitochondrial"/>
    <property type="match status" value="1"/>
</dbReference>
<dbReference type="FunFam" id="3.30.70.2570:FF:000001">
    <property type="entry name" value="Translation factor GUF1, mitochondrial"/>
    <property type="match status" value="1"/>
</dbReference>
<dbReference type="FunFam" id="3.30.70.870:FF:000004">
    <property type="entry name" value="Translation factor GUF1, mitochondrial"/>
    <property type="match status" value="1"/>
</dbReference>
<dbReference type="Gene3D" id="3.30.70.240">
    <property type="match status" value="1"/>
</dbReference>
<dbReference type="Gene3D" id="3.30.70.2570">
    <property type="entry name" value="Elongation factor 4, C-terminal domain"/>
    <property type="match status" value="1"/>
</dbReference>
<dbReference type="Gene3D" id="3.30.70.870">
    <property type="entry name" value="Elongation Factor G (Translational Gtpase), domain 3"/>
    <property type="match status" value="1"/>
</dbReference>
<dbReference type="Gene3D" id="3.40.50.300">
    <property type="entry name" value="P-loop containing nucleotide triphosphate hydrolases"/>
    <property type="match status" value="1"/>
</dbReference>
<dbReference type="Gene3D" id="2.40.30.10">
    <property type="entry name" value="Translation factors"/>
    <property type="match status" value="1"/>
</dbReference>
<dbReference type="HAMAP" id="MF_00071">
    <property type="entry name" value="LepA"/>
    <property type="match status" value="1"/>
</dbReference>
<dbReference type="InterPro" id="IPR006297">
    <property type="entry name" value="EF-4"/>
</dbReference>
<dbReference type="InterPro" id="IPR035647">
    <property type="entry name" value="EFG_III/V"/>
</dbReference>
<dbReference type="InterPro" id="IPR000640">
    <property type="entry name" value="EFG_V-like"/>
</dbReference>
<dbReference type="InterPro" id="IPR004161">
    <property type="entry name" value="EFTu-like_2"/>
</dbReference>
<dbReference type="InterPro" id="IPR031157">
    <property type="entry name" value="G_TR_CS"/>
</dbReference>
<dbReference type="InterPro" id="IPR038363">
    <property type="entry name" value="LepA_C_sf"/>
</dbReference>
<dbReference type="InterPro" id="IPR013842">
    <property type="entry name" value="LepA_CTD"/>
</dbReference>
<dbReference type="InterPro" id="IPR035654">
    <property type="entry name" value="LepA_IV"/>
</dbReference>
<dbReference type="InterPro" id="IPR027417">
    <property type="entry name" value="P-loop_NTPase"/>
</dbReference>
<dbReference type="InterPro" id="IPR005225">
    <property type="entry name" value="Small_GTP-bd"/>
</dbReference>
<dbReference type="InterPro" id="IPR000795">
    <property type="entry name" value="T_Tr_GTP-bd_dom"/>
</dbReference>
<dbReference type="InterPro" id="IPR009000">
    <property type="entry name" value="Transl_B-barrel_sf"/>
</dbReference>
<dbReference type="NCBIfam" id="TIGR01393">
    <property type="entry name" value="lepA"/>
    <property type="match status" value="1"/>
</dbReference>
<dbReference type="NCBIfam" id="TIGR00231">
    <property type="entry name" value="small_GTP"/>
    <property type="match status" value="1"/>
</dbReference>
<dbReference type="PANTHER" id="PTHR43512:SF4">
    <property type="entry name" value="TRANSLATION FACTOR GUF1 HOMOLOG, CHLOROPLASTIC"/>
    <property type="match status" value="1"/>
</dbReference>
<dbReference type="PANTHER" id="PTHR43512">
    <property type="entry name" value="TRANSLATION FACTOR GUF1-RELATED"/>
    <property type="match status" value="1"/>
</dbReference>
<dbReference type="Pfam" id="PF00679">
    <property type="entry name" value="EFG_C"/>
    <property type="match status" value="1"/>
</dbReference>
<dbReference type="Pfam" id="PF00009">
    <property type="entry name" value="GTP_EFTU"/>
    <property type="match status" value="1"/>
</dbReference>
<dbReference type="Pfam" id="PF03144">
    <property type="entry name" value="GTP_EFTU_D2"/>
    <property type="match status" value="1"/>
</dbReference>
<dbReference type="Pfam" id="PF06421">
    <property type="entry name" value="LepA_C"/>
    <property type="match status" value="1"/>
</dbReference>
<dbReference type="PRINTS" id="PR00315">
    <property type="entry name" value="ELONGATNFCT"/>
</dbReference>
<dbReference type="SMART" id="SM00838">
    <property type="entry name" value="EFG_C"/>
    <property type="match status" value="1"/>
</dbReference>
<dbReference type="SUPFAM" id="SSF54980">
    <property type="entry name" value="EF-G C-terminal domain-like"/>
    <property type="match status" value="2"/>
</dbReference>
<dbReference type="SUPFAM" id="SSF52540">
    <property type="entry name" value="P-loop containing nucleoside triphosphate hydrolases"/>
    <property type="match status" value="1"/>
</dbReference>
<dbReference type="SUPFAM" id="SSF50447">
    <property type="entry name" value="Translation proteins"/>
    <property type="match status" value="1"/>
</dbReference>
<dbReference type="PROSITE" id="PS00301">
    <property type="entry name" value="G_TR_1"/>
    <property type="match status" value="1"/>
</dbReference>
<dbReference type="PROSITE" id="PS51722">
    <property type="entry name" value="G_TR_2"/>
    <property type="match status" value="1"/>
</dbReference>
<keyword id="KW-0997">Cell inner membrane</keyword>
<keyword id="KW-1003">Cell membrane</keyword>
<keyword id="KW-0342">GTP-binding</keyword>
<keyword id="KW-0378">Hydrolase</keyword>
<keyword id="KW-0472">Membrane</keyword>
<keyword id="KW-0547">Nucleotide-binding</keyword>
<keyword id="KW-0648">Protein biosynthesis</keyword>
<keyword id="KW-1185">Reference proteome</keyword>
<name>LEPA_ACIET</name>
<comment type="function">
    <text evidence="1">Required for accurate and efficient protein synthesis under certain stress conditions. May act as a fidelity factor of the translation reaction, by catalyzing a one-codon backward translocation of tRNAs on improperly translocated ribosomes. Back-translocation proceeds from a post-translocation (POST) complex to a pre-translocation (PRE) complex, thus giving elongation factor G a second chance to translocate the tRNAs correctly. Binds to ribosomes in a GTP-dependent manner.</text>
</comment>
<comment type="catalytic activity">
    <reaction evidence="1">
        <text>GTP + H2O = GDP + phosphate + H(+)</text>
        <dbReference type="Rhea" id="RHEA:19669"/>
        <dbReference type="ChEBI" id="CHEBI:15377"/>
        <dbReference type="ChEBI" id="CHEBI:15378"/>
        <dbReference type="ChEBI" id="CHEBI:37565"/>
        <dbReference type="ChEBI" id="CHEBI:43474"/>
        <dbReference type="ChEBI" id="CHEBI:58189"/>
        <dbReference type="EC" id="3.6.5.n1"/>
    </reaction>
</comment>
<comment type="subcellular location">
    <subcellularLocation>
        <location evidence="1">Cell inner membrane</location>
        <topology evidence="1">Peripheral membrane protein</topology>
        <orientation evidence="1">Cytoplasmic side</orientation>
    </subcellularLocation>
</comment>
<comment type="similarity">
    <text evidence="1">Belongs to the TRAFAC class translation factor GTPase superfamily. Classic translation factor GTPase family. LepA subfamily.</text>
</comment>
<feature type="chain" id="PRO_1000190809" description="Elongation factor 4">
    <location>
        <begin position="1"/>
        <end position="602"/>
    </location>
</feature>
<feature type="domain" description="tr-type G">
    <location>
        <begin position="2"/>
        <end position="184"/>
    </location>
</feature>
<feature type="binding site" evidence="1">
    <location>
        <begin position="14"/>
        <end position="19"/>
    </location>
    <ligand>
        <name>GTP</name>
        <dbReference type="ChEBI" id="CHEBI:37565"/>
    </ligand>
</feature>
<feature type="binding site" evidence="1">
    <location>
        <begin position="131"/>
        <end position="134"/>
    </location>
    <ligand>
        <name>GTP</name>
        <dbReference type="ChEBI" id="CHEBI:37565"/>
    </ligand>
</feature>
<accession>B9MDP9</accession>
<gene>
    <name evidence="1" type="primary">lepA</name>
    <name type="ordered locus">Dtpsy_2623</name>
</gene>
<reference key="1">
    <citation type="submission" date="2009-01" db="EMBL/GenBank/DDBJ databases">
        <title>Complete sequence of Diaphorobacter sp. TPSY.</title>
        <authorList>
            <consortium name="US DOE Joint Genome Institute"/>
            <person name="Lucas S."/>
            <person name="Copeland A."/>
            <person name="Lapidus A."/>
            <person name="Glavina del Rio T."/>
            <person name="Tice H."/>
            <person name="Bruce D."/>
            <person name="Goodwin L."/>
            <person name="Pitluck S."/>
            <person name="Chertkov O."/>
            <person name="Brettin T."/>
            <person name="Detter J.C."/>
            <person name="Han C."/>
            <person name="Larimer F."/>
            <person name="Land M."/>
            <person name="Hauser L."/>
            <person name="Kyrpides N."/>
            <person name="Mikhailova N."/>
            <person name="Coates J.D."/>
        </authorList>
    </citation>
    <scope>NUCLEOTIDE SEQUENCE [LARGE SCALE GENOMIC DNA]</scope>
    <source>
        <strain>TPSY</strain>
    </source>
</reference>
<proteinExistence type="inferred from homology"/>
<organism>
    <name type="scientific">Acidovorax ebreus (strain TPSY)</name>
    <name type="common">Diaphorobacter sp. (strain TPSY)</name>
    <dbReference type="NCBI Taxonomy" id="535289"/>
    <lineage>
        <taxon>Bacteria</taxon>
        <taxon>Pseudomonadati</taxon>
        <taxon>Pseudomonadota</taxon>
        <taxon>Betaproteobacteria</taxon>
        <taxon>Burkholderiales</taxon>
        <taxon>Comamonadaceae</taxon>
        <taxon>Diaphorobacter</taxon>
    </lineage>
</organism>